<sequence length="379" mass="42617">MTNIGKTHPLLKIINSSFVDLPAPSSLSSWWNFGSLLGVCLGVQILTGLFLAMHYTSDTATAFNSVTHICRDVNYGWLLRYLHANGASMFFICLYLHVGRGLYYGSYTYSETWNIGILLLFAVMATAFMGYVLPWGQMSFWGATVITNLLSAIPYIGTELVQWIWGGFSVDKATLTRFFAFHFLLPFIVAALVMVHLLFLHETGSNNPTGIPSDSDMIPFHPYYTIKDILGFLIMLTALSTLVLFSPDLLGDPDNYIPANPLNTPPHIKPEWYFLFAYAILRSIPNKLGGVLALVMSILILAIVPILHMSKQRSMMFRPLSQCLFWLLVAILFTLTWIGGQPVEHPYIIIGQTASILYFLIILIFMPATSLMENYLLKW</sequence>
<protein>
    <recommendedName>
        <fullName>Cytochrome b</fullName>
    </recommendedName>
    <alternativeName>
        <fullName>Complex III subunit 3</fullName>
    </alternativeName>
    <alternativeName>
        <fullName>Complex III subunit III</fullName>
    </alternativeName>
    <alternativeName>
        <fullName>Cytochrome b-c1 complex subunit 3</fullName>
    </alternativeName>
    <alternativeName>
        <fullName>Ubiquinol-cytochrome-c reductase complex cytochrome b subunit</fullName>
    </alternativeName>
</protein>
<accession>Q53AK8</accession>
<geneLocation type="mitochondrion"/>
<feature type="chain" id="PRO_0000254774" description="Cytochrome b">
    <location>
        <begin position="1"/>
        <end position="379"/>
    </location>
</feature>
<feature type="transmembrane region" description="Helical" evidence="2">
    <location>
        <begin position="33"/>
        <end position="53"/>
    </location>
</feature>
<feature type="transmembrane region" description="Helical" evidence="2">
    <location>
        <begin position="77"/>
        <end position="98"/>
    </location>
</feature>
<feature type="transmembrane region" description="Helical" evidence="2">
    <location>
        <begin position="113"/>
        <end position="133"/>
    </location>
</feature>
<feature type="transmembrane region" description="Helical" evidence="2">
    <location>
        <begin position="178"/>
        <end position="198"/>
    </location>
</feature>
<feature type="transmembrane region" description="Helical" evidence="2">
    <location>
        <begin position="226"/>
        <end position="246"/>
    </location>
</feature>
<feature type="transmembrane region" description="Helical" evidence="2">
    <location>
        <begin position="288"/>
        <end position="308"/>
    </location>
</feature>
<feature type="transmembrane region" description="Helical" evidence="2">
    <location>
        <begin position="320"/>
        <end position="340"/>
    </location>
</feature>
<feature type="transmembrane region" description="Helical" evidence="2">
    <location>
        <begin position="347"/>
        <end position="367"/>
    </location>
</feature>
<feature type="binding site" description="axial binding residue" evidence="2">
    <location>
        <position position="83"/>
    </location>
    <ligand>
        <name>heme b</name>
        <dbReference type="ChEBI" id="CHEBI:60344"/>
        <label>b562</label>
    </ligand>
    <ligandPart>
        <name>Fe</name>
        <dbReference type="ChEBI" id="CHEBI:18248"/>
    </ligandPart>
</feature>
<feature type="binding site" description="axial binding residue" evidence="2">
    <location>
        <position position="97"/>
    </location>
    <ligand>
        <name>heme b</name>
        <dbReference type="ChEBI" id="CHEBI:60344"/>
        <label>b566</label>
    </ligand>
    <ligandPart>
        <name>Fe</name>
        <dbReference type="ChEBI" id="CHEBI:18248"/>
    </ligandPart>
</feature>
<feature type="binding site" description="axial binding residue" evidence="2">
    <location>
        <position position="182"/>
    </location>
    <ligand>
        <name>heme b</name>
        <dbReference type="ChEBI" id="CHEBI:60344"/>
        <label>b562</label>
    </ligand>
    <ligandPart>
        <name>Fe</name>
        <dbReference type="ChEBI" id="CHEBI:18248"/>
    </ligandPart>
</feature>
<feature type="binding site" description="axial binding residue" evidence="2">
    <location>
        <position position="196"/>
    </location>
    <ligand>
        <name>heme b</name>
        <dbReference type="ChEBI" id="CHEBI:60344"/>
        <label>b566</label>
    </ligand>
    <ligandPart>
        <name>Fe</name>
        <dbReference type="ChEBI" id="CHEBI:18248"/>
    </ligandPart>
</feature>
<feature type="binding site" evidence="2">
    <location>
        <position position="201"/>
    </location>
    <ligand>
        <name>a ubiquinone</name>
        <dbReference type="ChEBI" id="CHEBI:16389"/>
    </ligand>
</feature>
<name>CYB_AMECE</name>
<evidence type="ECO:0000250" key="1"/>
<evidence type="ECO:0000250" key="2">
    <source>
        <dbReference type="UniProtKB" id="P00157"/>
    </source>
</evidence>
<evidence type="ECO:0000255" key="3">
    <source>
        <dbReference type="PROSITE-ProRule" id="PRU00967"/>
    </source>
</evidence>
<evidence type="ECO:0000255" key="4">
    <source>
        <dbReference type="PROSITE-ProRule" id="PRU00968"/>
    </source>
</evidence>
<proteinExistence type="inferred from homology"/>
<comment type="function">
    <text evidence="2">Component of the ubiquinol-cytochrome c reductase complex (complex III or cytochrome b-c1 complex) that is part of the mitochondrial respiratory chain. The b-c1 complex mediates electron transfer from ubiquinol to cytochrome c. Contributes to the generation of a proton gradient across the mitochondrial membrane that is then used for ATP synthesis.</text>
</comment>
<comment type="cofactor">
    <cofactor evidence="2">
        <name>heme b</name>
        <dbReference type="ChEBI" id="CHEBI:60344"/>
    </cofactor>
    <text evidence="2">Binds 2 heme b groups non-covalently.</text>
</comment>
<comment type="subunit">
    <text evidence="2">The cytochrome bc1 complex contains 11 subunits: 3 respiratory subunits (MT-CYB, CYC1 and UQCRFS1), 2 core proteins (UQCRC1 and UQCRC2) and 6 low-molecular weight proteins (UQCRH/QCR6, UQCRB/QCR7, UQCRQ/QCR8, UQCR10/QCR9, UQCR11/QCR10 and a cleavage product of UQCRFS1). This cytochrome bc1 complex then forms a dimer.</text>
</comment>
<comment type="subcellular location">
    <subcellularLocation>
        <location evidence="2">Mitochondrion inner membrane</location>
        <topology evidence="2">Multi-pass membrane protein</topology>
    </subcellularLocation>
</comment>
<comment type="miscellaneous">
    <text evidence="1">Heme 1 (or BL or b562) is low-potential and absorbs at about 562 nm, and heme 2 (or BH or b566) is high-potential and absorbs at about 566 nm.</text>
</comment>
<comment type="similarity">
    <text evidence="3 4">Belongs to the cytochrome b family.</text>
</comment>
<comment type="caution">
    <text evidence="2">The full-length protein contains only eight transmembrane helices, not nine as predicted by bioinformatics tools.</text>
</comment>
<organism>
    <name type="scientific">Ametrida centurio</name>
    <name type="common">Small leaf-nosed bat</name>
    <name type="synonym">Little white-shouldered bat</name>
    <dbReference type="NCBI Taxonomy" id="148033"/>
    <lineage>
        <taxon>Eukaryota</taxon>
        <taxon>Metazoa</taxon>
        <taxon>Chordata</taxon>
        <taxon>Craniata</taxon>
        <taxon>Vertebrata</taxon>
        <taxon>Euteleostomi</taxon>
        <taxon>Mammalia</taxon>
        <taxon>Eutheria</taxon>
        <taxon>Laurasiatheria</taxon>
        <taxon>Chiroptera</taxon>
        <taxon>Yangochiroptera</taxon>
        <taxon>Phyllostomidae</taxon>
        <taxon>Stenodermatinae</taxon>
        <taxon>Ametrida</taxon>
    </lineage>
</organism>
<dbReference type="EMBL" id="AY604446">
    <property type="protein sequence ID" value="AAT46149.1"/>
    <property type="molecule type" value="Genomic_DNA"/>
</dbReference>
<dbReference type="SMR" id="Q53AK8"/>
<dbReference type="GO" id="GO:0005743">
    <property type="term" value="C:mitochondrial inner membrane"/>
    <property type="evidence" value="ECO:0007669"/>
    <property type="project" value="UniProtKB-SubCell"/>
</dbReference>
<dbReference type="GO" id="GO:0045275">
    <property type="term" value="C:respiratory chain complex III"/>
    <property type="evidence" value="ECO:0007669"/>
    <property type="project" value="InterPro"/>
</dbReference>
<dbReference type="GO" id="GO:0046872">
    <property type="term" value="F:metal ion binding"/>
    <property type="evidence" value="ECO:0007669"/>
    <property type="project" value="UniProtKB-KW"/>
</dbReference>
<dbReference type="GO" id="GO:0008121">
    <property type="term" value="F:ubiquinol-cytochrome-c reductase activity"/>
    <property type="evidence" value="ECO:0007669"/>
    <property type="project" value="InterPro"/>
</dbReference>
<dbReference type="GO" id="GO:0006122">
    <property type="term" value="P:mitochondrial electron transport, ubiquinol to cytochrome c"/>
    <property type="evidence" value="ECO:0007669"/>
    <property type="project" value="TreeGrafter"/>
</dbReference>
<dbReference type="CDD" id="cd00290">
    <property type="entry name" value="cytochrome_b_C"/>
    <property type="match status" value="1"/>
</dbReference>
<dbReference type="CDD" id="cd00284">
    <property type="entry name" value="Cytochrome_b_N"/>
    <property type="match status" value="1"/>
</dbReference>
<dbReference type="FunFam" id="1.20.810.10:FF:000002">
    <property type="entry name" value="Cytochrome b"/>
    <property type="match status" value="1"/>
</dbReference>
<dbReference type="Gene3D" id="1.20.810.10">
    <property type="entry name" value="Cytochrome Bc1 Complex, Chain C"/>
    <property type="match status" value="1"/>
</dbReference>
<dbReference type="InterPro" id="IPR005798">
    <property type="entry name" value="Cyt_b/b6_C"/>
</dbReference>
<dbReference type="InterPro" id="IPR036150">
    <property type="entry name" value="Cyt_b/b6_C_sf"/>
</dbReference>
<dbReference type="InterPro" id="IPR005797">
    <property type="entry name" value="Cyt_b/b6_N"/>
</dbReference>
<dbReference type="InterPro" id="IPR027387">
    <property type="entry name" value="Cytb/b6-like_sf"/>
</dbReference>
<dbReference type="InterPro" id="IPR030689">
    <property type="entry name" value="Cytochrome_b"/>
</dbReference>
<dbReference type="InterPro" id="IPR048260">
    <property type="entry name" value="Cytochrome_b_C_euk/bac"/>
</dbReference>
<dbReference type="InterPro" id="IPR048259">
    <property type="entry name" value="Cytochrome_b_N_euk/bac"/>
</dbReference>
<dbReference type="InterPro" id="IPR016174">
    <property type="entry name" value="Di-haem_cyt_TM"/>
</dbReference>
<dbReference type="PANTHER" id="PTHR19271">
    <property type="entry name" value="CYTOCHROME B"/>
    <property type="match status" value="1"/>
</dbReference>
<dbReference type="PANTHER" id="PTHR19271:SF16">
    <property type="entry name" value="CYTOCHROME B"/>
    <property type="match status" value="1"/>
</dbReference>
<dbReference type="Pfam" id="PF00032">
    <property type="entry name" value="Cytochrom_B_C"/>
    <property type="match status" value="1"/>
</dbReference>
<dbReference type="Pfam" id="PF00033">
    <property type="entry name" value="Cytochrome_B"/>
    <property type="match status" value="1"/>
</dbReference>
<dbReference type="PIRSF" id="PIRSF038885">
    <property type="entry name" value="COB"/>
    <property type="match status" value="1"/>
</dbReference>
<dbReference type="SUPFAM" id="SSF81648">
    <property type="entry name" value="a domain/subunit of cytochrome bc1 complex (Ubiquinol-cytochrome c reductase)"/>
    <property type="match status" value="1"/>
</dbReference>
<dbReference type="SUPFAM" id="SSF81342">
    <property type="entry name" value="Transmembrane di-heme cytochromes"/>
    <property type="match status" value="1"/>
</dbReference>
<dbReference type="PROSITE" id="PS51003">
    <property type="entry name" value="CYTB_CTER"/>
    <property type="match status" value="1"/>
</dbReference>
<dbReference type="PROSITE" id="PS51002">
    <property type="entry name" value="CYTB_NTER"/>
    <property type="match status" value="1"/>
</dbReference>
<reference key="1">
    <citation type="journal article" date="2007" name="J. Biogeogr.">
        <title>Short-faced bats (Phyllostomidae: Stenodermatina): a Caribbean radiation of strict frugivores.</title>
        <authorList>
            <person name="Davalos L.M."/>
        </authorList>
        <dbReference type="AGRICOLA" id="IND43870880"/>
    </citation>
    <scope>NUCLEOTIDE SEQUENCE [GENOMIC DNA]</scope>
</reference>
<keyword id="KW-0249">Electron transport</keyword>
<keyword id="KW-0349">Heme</keyword>
<keyword id="KW-0408">Iron</keyword>
<keyword id="KW-0472">Membrane</keyword>
<keyword id="KW-0479">Metal-binding</keyword>
<keyword id="KW-0496">Mitochondrion</keyword>
<keyword id="KW-0999">Mitochondrion inner membrane</keyword>
<keyword id="KW-0679">Respiratory chain</keyword>
<keyword id="KW-0812">Transmembrane</keyword>
<keyword id="KW-1133">Transmembrane helix</keyword>
<keyword id="KW-0813">Transport</keyword>
<keyword id="KW-0830">Ubiquinone</keyword>
<gene>
    <name type="primary">MT-CYB</name>
    <name type="synonym">COB</name>
    <name type="synonym">CYTB</name>
    <name type="synonym">MTCYB</name>
</gene>